<sequence>MGMLALGAMQLAAGAVFEFPSCPKDIPFSCQNSTAVADSCCFNSPGGALLQTQFWDTNPPSGPSDSWTIHGLWPDNCDGSYGQFCDKSREYSNITAILQEQGRTELLSYMKKYWPNYEGDDEEFWEHEWNKHGTCINTIEPSCYKDYSPQKEVGDYLQKTVDLFKGLDSYKALAKAGIVPDSSKTYKRSEIESALAAIHDGKKPYISCEDGALNEIWYFYNIKGNAITGEYQPIDTLTSPGCSTSGIKYLPKKSENSTASAWKFRSDKASQSVRFN</sequence>
<accession>P10281</accession>
<accession>Q2UQZ3</accession>
<evidence type="ECO:0000250" key="1"/>
<evidence type="ECO:0000255" key="2">
    <source>
        <dbReference type="PROSITE-ProRule" id="PRU10045"/>
    </source>
</evidence>
<evidence type="ECO:0000255" key="3">
    <source>
        <dbReference type="PROSITE-ProRule" id="PRU10046"/>
    </source>
</evidence>
<evidence type="ECO:0000269" key="4">
    <source>
    </source>
</evidence>
<evidence type="ECO:0000269" key="5">
    <source>
    </source>
</evidence>
<evidence type="ECO:0000305" key="6"/>
<organism>
    <name type="scientific">Aspergillus oryzae (strain ATCC 42149 / RIB 40)</name>
    <name type="common">Yellow koji mold</name>
    <dbReference type="NCBI Taxonomy" id="510516"/>
    <lineage>
        <taxon>Eukaryota</taxon>
        <taxon>Fungi</taxon>
        <taxon>Dikarya</taxon>
        <taxon>Ascomycota</taxon>
        <taxon>Pezizomycotina</taxon>
        <taxon>Eurotiomycetes</taxon>
        <taxon>Eurotiomycetidae</taxon>
        <taxon>Eurotiales</taxon>
        <taxon>Aspergillaceae</taxon>
        <taxon>Aspergillus</taxon>
        <taxon>Aspergillus subgen. Circumdati</taxon>
    </lineage>
</organism>
<proteinExistence type="evidence at protein level"/>
<comment type="catalytic activity">
    <reaction evidence="2 3">
        <text>a ribonucleotidyl-ribonucleotide-RNA + H2O = a 3'-end 3'-phospho-ribonucleotide-RNA + a 5'-end dephospho-ribonucleoside-RNA + H(+)</text>
        <dbReference type="Rhea" id="RHEA:68052"/>
        <dbReference type="Rhea" id="RHEA-COMP:10463"/>
        <dbReference type="Rhea" id="RHEA-COMP:13936"/>
        <dbReference type="Rhea" id="RHEA-COMP:17355"/>
        <dbReference type="ChEBI" id="CHEBI:15377"/>
        <dbReference type="ChEBI" id="CHEBI:15378"/>
        <dbReference type="ChEBI" id="CHEBI:83062"/>
        <dbReference type="ChEBI" id="CHEBI:138284"/>
        <dbReference type="ChEBI" id="CHEBI:173118"/>
        <dbReference type="EC" id="4.6.1.19"/>
    </reaction>
</comment>
<comment type="miscellaneous">
    <text>Preference for adenylic acid.</text>
</comment>
<comment type="similarity">
    <text evidence="6">Belongs to the RNase T2 family.</text>
</comment>
<comment type="sequence caution" evidence="6">
    <conflict type="erroneous initiation">
        <sequence resource="EMBL-CDS" id="BAE56022"/>
    </conflict>
</comment>
<protein>
    <recommendedName>
        <fullName>Ribonuclease T2</fullName>
        <shortName>RNase T2</shortName>
        <ecNumber>4.6.1.19</ecNumber>
    </recommendedName>
</protein>
<keyword id="KW-0903">Direct protein sequencing</keyword>
<keyword id="KW-1015">Disulfide bond</keyword>
<keyword id="KW-0255">Endonuclease</keyword>
<keyword id="KW-0325">Glycoprotein</keyword>
<keyword id="KW-0378">Hydrolase</keyword>
<keyword id="KW-0456">Lyase</keyword>
<keyword id="KW-0540">Nuclease</keyword>
<keyword id="KW-1185">Reference proteome</keyword>
<keyword id="KW-0732">Signal</keyword>
<reference key="1">
    <citation type="journal article" date="1991" name="Curr. Genet.">
        <title>Cloning and nucleotide sequence of the genomic ribonuclease T2 gene (rntB) from Aspergillus oryzae.</title>
        <authorList>
            <person name="Ozeki K."/>
            <person name="Kitamoto K."/>
            <person name="Gomi K."/>
            <person name="Kumagai C."/>
            <person name="Tamura G."/>
            <person name="Hara S."/>
        </authorList>
    </citation>
    <scope>NUCLEOTIDE SEQUENCE [GENOMIC DNA]</scope>
    <source>
        <strain>ATCC 42149 / RIB 40</strain>
    </source>
</reference>
<reference key="2">
    <citation type="journal article" date="2005" name="Nature">
        <title>Genome sequencing and analysis of Aspergillus oryzae.</title>
        <authorList>
            <person name="Machida M."/>
            <person name="Asai K."/>
            <person name="Sano M."/>
            <person name="Tanaka T."/>
            <person name="Kumagai T."/>
            <person name="Terai G."/>
            <person name="Kusumoto K."/>
            <person name="Arima T."/>
            <person name="Akita O."/>
            <person name="Kashiwagi Y."/>
            <person name="Abe K."/>
            <person name="Gomi K."/>
            <person name="Horiuchi H."/>
            <person name="Kitamoto K."/>
            <person name="Kobayashi T."/>
            <person name="Takeuchi M."/>
            <person name="Denning D.W."/>
            <person name="Galagan J.E."/>
            <person name="Nierman W.C."/>
            <person name="Yu J."/>
            <person name="Archer D.B."/>
            <person name="Bennett J.W."/>
            <person name="Bhatnagar D."/>
            <person name="Cleveland T.E."/>
            <person name="Fedorova N.D."/>
            <person name="Gotoh O."/>
            <person name="Horikawa H."/>
            <person name="Hosoyama A."/>
            <person name="Ichinomiya M."/>
            <person name="Igarashi R."/>
            <person name="Iwashita K."/>
            <person name="Juvvadi P.R."/>
            <person name="Kato M."/>
            <person name="Kato Y."/>
            <person name="Kin T."/>
            <person name="Kokubun A."/>
            <person name="Maeda H."/>
            <person name="Maeyama N."/>
            <person name="Maruyama J."/>
            <person name="Nagasaki H."/>
            <person name="Nakajima T."/>
            <person name="Oda K."/>
            <person name="Okada K."/>
            <person name="Paulsen I."/>
            <person name="Sakamoto K."/>
            <person name="Sawano T."/>
            <person name="Takahashi M."/>
            <person name="Takase K."/>
            <person name="Terabayashi Y."/>
            <person name="Wortman J.R."/>
            <person name="Yamada O."/>
            <person name="Yamagata Y."/>
            <person name="Anazawa H."/>
            <person name="Hata Y."/>
            <person name="Koide Y."/>
            <person name="Komori T."/>
            <person name="Koyama Y."/>
            <person name="Minetoki T."/>
            <person name="Suharnan S."/>
            <person name="Tanaka A."/>
            <person name="Isono K."/>
            <person name="Kuhara S."/>
            <person name="Ogasawara N."/>
            <person name="Kikuchi H."/>
        </authorList>
    </citation>
    <scope>NUCLEOTIDE SEQUENCE [LARGE SCALE GENOMIC DNA]</scope>
    <source>
        <strain>ATCC 42149 / RIB 40</strain>
    </source>
</reference>
<reference key="3">
    <citation type="journal article" date="1988" name="Eur. J. Biochem.">
        <title>Amino-acid sequence of ribonuclease T2 from Aspergillus oryzae.</title>
        <authorList>
            <person name="Kawata Y."/>
            <person name="Sakiyama F."/>
            <person name="Tamaoki H."/>
        </authorList>
    </citation>
    <scope>PROTEIN SEQUENCE OF 18-256</scope>
</reference>
<reference key="4">
    <citation type="journal article" date="1990" name="Eur. J. Biochem.">
        <title>Identification of two essential histidine residues of ribonuclease T2 from Aspergillus oryzae.</title>
        <authorList>
            <person name="Kawata Y."/>
            <person name="Sakiyama F."/>
            <person name="Hayashi F."/>
            <person name="Kyogoku Y."/>
        </authorList>
    </citation>
    <scope>ACTIVE SITES</scope>
</reference>
<gene>
    <name type="primary">rntB</name>
    <name type="ORF">AO090005001044</name>
</gene>
<name>RNT2_ASPOR</name>
<dbReference type="EC" id="4.6.1.19"/>
<dbReference type="EMBL" id="X61086">
    <property type="protein sequence ID" value="CAA43400.1"/>
    <property type="molecule type" value="Genomic_DNA"/>
</dbReference>
<dbReference type="EMBL" id="BA000049">
    <property type="protein sequence ID" value="BAE56022.1"/>
    <property type="status" value="ALT_INIT"/>
    <property type="molecule type" value="Genomic_DNA"/>
</dbReference>
<dbReference type="PIR" id="JU0205">
    <property type="entry name" value="JU0205"/>
</dbReference>
<dbReference type="RefSeq" id="XP_001818024.1">
    <property type="nucleotide sequence ID" value="XM_001817972.2"/>
</dbReference>
<dbReference type="SMR" id="P10281"/>
<dbReference type="STRING" id="510516.P10281"/>
<dbReference type="GlyCosmos" id="P10281">
    <property type="glycosylation" value="3 sites, No reported glycans"/>
</dbReference>
<dbReference type="EnsemblFungi" id="BAE56022">
    <property type="protein sequence ID" value="BAE56022"/>
    <property type="gene ID" value="AO090005001044"/>
</dbReference>
<dbReference type="GeneID" id="5989969"/>
<dbReference type="KEGG" id="aor:AO090005001044"/>
<dbReference type="OrthoDB" id="2308at5052"/>
<dbReference type="Proteomes" id="UP000006564">
    <property type="component" value="Chromosome 1"/>
</dbReference>
<dbReference type="GO" id="GO:0005576">
    <property type="term" value="C:extracellular region"/>
    <property type="evidence" value="ECO:0007669"/>
    <property type="project" value="TreeGrafter"/>
</dbReference>
<dbReference type="GO" id="GO:0033897">
    <property type="term" value="F:ribonuclease T2 activity"/>
    <property type="evidence" value="ECO:0007669"/>
    <property type="project" value="UniProtKB-EC"/>
</dbReference>
<dbReference type="GO" id="GO:0003723">
    <property type="term" value="F:RNA binding"/>
    <property type="evidence" value="ECO:0007669"/>
    <property type="project" value="InterPro"/>
</dbReference>
<dbReference type="GO" id="GO:0006401">
    <property type="term" value="P:RNA catabolic process"/>
    <property type="evidence" value="ECO:0007669"/>
    <property type="project" value="TreeGrafter"/>
</dbReference>
<dbReference type="CDD" id="cd01061">
    <property type="entry name" value="RNase_T2_euk"/>
    <property type="match status" value="1"/>
</dbReference>
<dbReference type="FunFam" id="3.90.730.10:FF:000004">
    <property type="entry name" value="Ribonuclease T2-like"/>
    <property type="match status" value="1"/>
</dbReference>
<dbReference type="Gene3D" id="3.90.730.10">
    <property type="entry name" value="Ribonuclease T2-like"/>
    <property type="match status" value="1"/>
</dbReference>
<dbReference type="InterPro" id="IPR033697">
    <property type="entry name" value="Ribonuclease_T2_eukaryotic"/>
</dbReference>
<dbReference type="InterPro" id="IPR001568">
    <property type="entry name" value="RNase_T2-like"/>
</dbReference>
<dbReference type="InterPro" id="IPR036430">
    <property type="entry name" value="RNase_T2-like_sf"/>
</dbReference>
<dbReference type="InterPro" id="IPR018188">
    <property type="entry name" value="RNase_T2_His_AS_1"/>
</dbReference>
<dbReference type="InterPro" id="IPR033130">
    <property type="entry name" value="RNase_T2_His_AS_2"/>
</dbReference>
<dbReference type="PANTHER" id="PTHR11240">
    <property type="entry name" value="RIBONUCLEASE T2"/>
    <property type="match status" value="1"/>
</dbReference>
<dbReference type="PANTHER" id="PTHR11240:SF79">
    <property type="entry name" value="RIBONUCLEASE T2"/>
    <property type="match status" value="1"/>
</dbReference>
<dbReference type="Pfam" id="PF00445">
    <property type="entry name" value="Ribonuclease_T2"/>
    <property type="match status" value="1"/>
</dbReference>
<dbReference type="SUPFAM" id="SSF55895">
    <property type="entry name" value="Ribonuclease Rh-like"/>
    <property type="match status" value="1"/>
</dbReference>
<dbReference type="PROSITE" id="PS00530">
    <property type="entry name" value="RNASE_T2_1"/>
    <property type="match status" value="1"/>
</dbReference>
<dbReference type="PROSITE" id="PS00531">
    <property type="entry name" value="RNASE_T2_2"/>
    <property type="match status" value="1"/>
</dbReference>
<feature type="signal peptide" evidence="5">
    <location>
        <begin position="1"/>
        <end position="17"/>
    </location>
</feature>
<feature type="chain" id="PRO_0000030965" description="Ribonuclease T2">
    <location>
        <begin position="18"/>
        <end position="276"/>
    </location>
</feature>
<feature type="active site" evidence="4">
    <location>
        <position position="70"/>
    </location>
</feature>
<feature type="active site" evidence="1">
    <location>
        <position position="128"/>
    </location>
</feature>
<feature type="active site" evidence="4">
    <location>
        <position position="132"/>
    </location>
</feature>
<feature type="glycosylation site" description="N-linked (GlcNAc...) asparagine">
    <location>
        <position position="32"/>
    </location>
</feature>
<feature type="glycosylation site" description="N-linked (GlcNAc...) asparagine">
    <location>
        <position position="93"/>
    </location>
</feature>
<feature type="glycosylation site" description="N-linked (GlcNAc...) asparagine">
    <location>
        <position position="256"/>
    </location>
</feature>
<feature type="disulfide bond" evidence="1">
    <location>
        <begin position="22"/>
        <end position="41"/>
    </location>
</feature>
<feature type="disulfide bond" evidence="1">
    <location>
        <begin position="30"/>
        <end position="77"/>
    </location>
</feature>
<feature type="disulfide bond" evidence="1">
    <location>
        <begin position="40"/>
        <end position="143"/>
    </location>
</feature>
<feature type="disulfide bond">
    <location>
        <begin position="85"/>
        <end position="135"/>
    </location>
</feature>
<feature type="disulfide bond">
    <location>
        <begin position="208"/>
        <end position="242"/>
    </location>
</feature>